<name>PCP_STAAC</name>
<protein>
    <recommendedName>
        <fullName evidence="1">Pyrrolidone-carboxylate peptidase</fullName>
        <ecNumber evidence="1">3.4.19.3</ecNumber>
    </recommendedName>
    <alternativeName>
        <fullName evidence="1">5-oxoprolyl-peptidase</fullName>
    </alternativeName>
    <alternativeName>
        <fullName evidence="1">Pyroglutamyl-peptidase I</fullName>
        <shortName evidence="1">PGP-I</shortName>
        <shortName evidence="1">Pyrase</shortName>
    </alternativeName>
</protein>
<evidence type="ECO:0000255" key="1">
    <source>
        <dbReference type="HAMAP-Rule" id="MF_00417"/>
    </source>
</evidence>
<evidence type="ECO:0007829" key="2">
    <source>
        <dbReference type="PDB" id="3GIU"/>
    </source>
</evidence>
<accession>Q5HCK7</accession>
<feature type="chain" id="PRO_0000184731" description="Pyrrolidone-carboxylate peptidase">
    <location>
        <begin position="1"/>
        <end position="212"/>
    </location>
</feature>
<feature type="active site" evidence="1">
    <location>
        <position position="78"/>
    </location>
</feature>
<feature type="active site" evidence="1">
    <location>
        <position position="141"/>
    </location>
</feature>
<feature type="active site" evidence="1">
    <location>
        <position position="165"/>
    </location>
</feature>
<feature type="strand" evidence="2">
    <location>
        <begin position="2"/>
        <end position="8"/>
    </location>
</feature>
<feature type="helix" evidence="2">
    <location>
        <begin position="18"/>
        <end position="25"/>
    </location>
</feature>
<feature type="strand" evidence="2">
    <location>
        <begin position="28"/>
        <end position="30"/>
    </location>
</feature>
<feature type="strand" evidence="2">
    <location>
        <begin position="33"/>
        <end position="40"/>
    </location>
</feature>
<feature type="helix" evidence="2">
    <location>
        <begin position="44"/>
        <end position="57"/>
    </location>
</feature>
<feature type="strand" evidence="2">
    <location>
        <begin position="61"/>
        <end position="68"/>
    </location>
</feature>
<feature type="strand" evidence="2">
    <location>
        <begin position="74"/>
        <end position="78"/>
    </location>
</feature>
<feature type="strand" evidence="2">
    <location>
        <begin position="80"/>
        <end position="83"/>
    </location>
</feature>
<feature type="strand" evidence="2">
    <location>
        <begin position="98"/>
        <end position="100"/>
    </location>
</feature>
<feature type="strand" evidence="2">
    <location>
        <begin position="108"/>
        <end position="111"/>
    </location>
</feature>
<feature type="helix" evidence="2">
    <location>
        <begin position="116"/>
        <end position="125"/>
    </location>
</feature>
<feature type="helix" evidence="2">
    <location>
        <begin position="140"/>
        <end position="154"/>
    </location>
</feature>
<feature type="strand" evidence="2">
    <location>
        <begin position="160"/>
        <end position="166"/>
    </location>
</feature>
<feature type="helix" evidence="2">
    <location>
        <begin position="170"/>
        <end position="173"/>
    </location>
</feature>
<feature type="helix" evidence="2">
    <location>
        <begin position="184"/>
        <end position="196"/>
    </location>
</feature>
<comment type="function">
    <text evidence="1">Removes 5-oxoproline from various penultimate amino acid residues except L-proline.</text>
</comment>
<comment type="catalytic activity">
    <reaction evidence="1">
        <text>Release of an N-terminal pyroglutamyl group from a polypeptide, the second amino acid generally not being Pro.</text>
        <dbReference type="EC" id="3.4.19.3"/>
    </reaction>
</comment>
<comment type="subunit">
    <text evidence="1">Homotetramer.</text>
</comment>
<comment type="subcellular location">
    <subcellularLocation>
        <location evidence="1">Cytoplasm</location>
    </subcellularLocation>
</comment>
<comment type="similarity">
    <text evidence="1">Belongs to the peptidase C15 family.</text>
</comment>
<keyword id="KW-0002">3D-structure</keyword>
<keyword id="KW-0963">Cytoplasm</keyword>
<keyword id="KW-0378">Hydrolase</keyword>
<keyword id="KW-0645">Protease</keyword>
<keyword id="KW-0788">Thiol protease</keyword>
<sequence length="212" mass="23167">MHILVTGFAPFDNQNINPSWEAVTQLEDIIGTHTIDKLKLPTSFKKVDNIINKTLASNHYDVVLAIGQAGGRNAITPERVAINIDDARIPDNDDFQPIDQAIHLDGAPAYFSNLPVKAMTQSIINQGLPGALSNSAGTFVCNHTLYHLGYLQDKHYPHLRFGFIHVPYIPEQVIGKPDTPSMPLEKIVAGLTAAIEAISNDEDLHLALGTTE</sequence>
<dbReference type="EC" id="3.4.19.3" evidence="1"/>
<dbReference type="EMBL" id="CP000046">
    <property type="protein sequence ID" value="AAW37362.1"/>
    <property type="molecule type" value="Genomic_DNA"/>
</dbReference>
<dbReference type="RefSeq" id="WP_000547833.1">
    <property type="nucleotide sequence ID" value="NZ_JBGOFO010000001.1"/>
</dbReference>
<dbReference type="PDB" id="3GIU">
    <property type="method" value="X-ray"/>
    <property type="resolution" value="1.25 A"/>
    <property type="chains" value="A/B=1-212"/>
</dbReference>
<dbReference type="PDBsum" id="3GIU"/>
<dbReference type="SMR" id="Q5HCK7"/>
<dbReference type="MEROPS" id="C15.001"/>
<dbReference type="KEGG" id="sac:SACOL2714"/>
<dbReference type="HOGENOM" id="CLU_043960_4_0_9"/>
<dbReference type="EvolutionaryTrace" id="Q5HCK7"/>
<dbReference type="Proteomes" id="UP000000530">
    <property type="component" value="Chromosome"/>
</dbReference>
<dbReference type="GO" id="GO:0005829">
    <property type="term" value="C:cytosol"/>
    <property type="evidence" value="ECO:0007669"/>
    <property type="project" value="InterPro"/>
</dbReference>
<dbReference type="GO" id="GO:0016920">
    <property type="term" value="F:pyroglutamyl-peptidase activity"/>
    <property type="evidence" value="ECO:0007669"/>
    <property type="project" value="UniProtKB-UniRule"/>
</dbReference>
<dbReference type="GO" id="GO:0006508">
    <property type="term" value="P:proteolysis"/>
    <property type="evidence" value="ECO:0007669"/>
    <property type="project" value="UniProtKB-KW"/>
</dbReference>
<dbReference type="CDD" id="cd00501">
    <property type="entry name" value="Peptidase_C15"/>
    <property type="match status" value="1"/>
</dbReference>
<dbReference type="FunFam" id="3.40.630.20:FF:000001">
    <property type="entry name" value="Pyrrolidone-carboxylate peptidase"/>
    <property type="match status" value="1"/>
</dbReference>
<dbReference type="Gene3D" id="3.40.630.20">
    <property type="entry name" value="Peptidase C15, pyroglutamyl peptidase I-like"/>
    <property type="match status" value="1"/>
</dbReference>
<dbReference type="HAMAP" id="MF_00417">
    <property type="entry name" value="Pyrrolid_peptidase"/>
    <property type="match status" value="1"/>
</dbReference>
<dbReference type="InterPro" id="IPR000816">
    <property type="entry name" value="Peptidase_C15"/>
</dbReference>
<dbReference type="InterPro" id="IPR016125">
    <property type="entry name" value="Peptidase_C15-like"/>
</dbReference>
<dbReference type="InterPro" id="IPR036440">
    <property type="entry name" value="Peptidase_C15-like_sf"/>
</dbReference>
<dbReference type="InterPro" id="IPR029762">
    <property type="entry name" value="PGP-I_bact-type"/>
</dbReference>
<dbReference type="InterPro" id="IPR033694">
    <property type="entry name" value="PGPEP1_Cys_AS"/>
</dbReference>
<dbReference type="InterPro" id="IPR033693">
    <property type="entry name" value="PGPEP1_Glu_AS"/>
</dbReference>
<dbReference type="NCBIfam" id="NF009676">
    <property type="entry name" value="PRK13197.1"/>
    <property type="match status" value="1"/>
</dbReference>
<dbReference type="NCBIfam" id="TIGR00504">
    <property type="entry name" value="pyro_pdase"/>
    <property type="match status" value="1"/>
</dbReference>
<dbReference type="PANTHER" id="PTHR23402">
    <property type="entry name" value="PROTEASE FAMILY C15 PYROGLUTAMYL-PEPTIDASE I-RELATED"/>
    <property type="match status" value="1"/>
</dbReference>
<dbReference type="PANTHER" id="PTHR23402:SF1">
    <property type="entry name" value="PYROGLUTAMYL-PEPTIDASE I"/>
    <property type="match status" value="1"/>
</dbReference>
<dbReference type="Pfam" id="PF01470">
    <property type="entry name" value="Peptidase_C15"/>
    <property type="match status" value="1"/>
</dbReference>
<dbReference type="PIRSF" id="PIRSF015592">
    <property type="entry name" value="Prld-crbxl_pptds"/>
    <property type="match status" value="1"/>
</dbReference>
<dbReference type="PRINTS" id="PR00706">
    <property type="entry name" value="PYROGLUPTASE"/>
</dbReference>
<dbReference type="SUPFAM" id="SSF53182">
    <property type="entry name" value="Pyrrolidone carboxyl peptidase (pyroglutamate aminopeptidase)"/>
    <property type="match status" value="1"/>
</dbReference>
<dbReference type="PROSITE" id="PS01334">
    <property type="entry name" value="PYRASE_CYS"/>
    <property type="match status" value="1"/>
</dbReference>
<dbReference type="PROSITE" id="PS01333">
    <property type="entry name" value="PYRASE_GLU"/>
    <property type="match status" value="1"/>
</dbReference>
<reference key="1">
    <citation type="journal article" date="2005" name="J. Bacteriol.">
        <title>Insights on evolution of virulence and resistance from the complete genome analysis of an early methicillin-resistant Staphylococcus aureus strain and a biofilm-producing methicillin-resistant Staphylococcus epidermidis strain.</title>
        <authorList>
            <person name="Gill S.R."/>
            <person name="Fouts D.E."/>
            <person name="Archer G.L."/>
            <person name="Mongodin E.F."/>
            <person name="DeBoy R.T."/>
            <person name="Ravel J."/>
            <person name="Paulsen I.T."/>
            <person name="Kolonay J.F."/>
            <person name="Brinkac L.M."/>
            <person name="Beanan M.J."/>
            <person name="Dodson R.J."/>
            <person name="Daugherty S.C."/>
            <person name="Madupu R."/>
            <person name="Angiuoli S.V."/>
            <person name="Durkin A.S."/>
            <person name="Haft D.H."/>
            <person name="Vamathevan J.J."/>
            <person name="Khouri H."/>
            <person name="Utterback T.R."/>
            <person name="Lee C."/>
            <person name="Dimitrov G."/>
            <person name="Jiang L."/>
            <person name="Qin H."/>
            <person name="Weidman J."/>
            <person name="Tran K."/>
            <person name="Kang K.H."/>
            <person name="Hance I.R."/>
            <person name="Nelson K.E."/>
            <person name="Fraser C.M."/>
        </authorList>
    </citation>
    <scope>NUCLEOTIDE SEQUENCE [LARGE SCALE GENOMIC DNA]</scope>
    <source>
        <strain>COL</strain>
    </source>
</reference>
<organism>
    <name type="scientific">Staphylococcus aureus (strain COL)</name>
    <dbReference type="NCBI Taxonomy" id="93062"/>
    <lineage>
        <taxon>Bacteria</taxon>
        <taxon>Bacillati</taxon>
        <taxon>Bacillota</taxon>
        <taxon>Bacilli</taxon>
        <taxon>Bacillales</taxon>
        <taxon>Staphylococcaceae</taxon>
        <taxon>Staphylococcus</taxon>
    </lineage>
</organism>
<proteinExistence type="evidence at protein level"/>
<gene>
    <name evidence="1" type="primary">pcp</name>
    <name type="ordered locus">SACOL2714</name>
</gene>